<dbReference type="EMBL" id="AE017355">
    <property type="protein sequence ID" value="AAT60779.1"/>
    <property type="molecule type" value="Genomic_DNA"/>
</dbReference>
<dbReference type="RefSeq" id="WP_001143076.1">
    <property type="nucleotide sequence ID" value="NC_005957.1"/>
</dbReference>
<dbReference type="RefSeq" id="YP_038265.1">
    <property type="nucleotide sequence ID" value="NC_005957.1"/>
</dbReference>
<dbReference type="SMR" id="Q6HDW1"/>
<dbReference type="GeneID" id="75087347"/>
<dbReference type="KEGG" id="btk:BT9727_3946"/>
<dbReference type="PATRIC" id="fig|281309.8.peg.4209"/>
<dbReference type="HOGENOM" id="CLU_069532_3_0_9"/>
<dbReference type="Proteomes" id="UP000001301">
    <property type="component" value="Chromosome"/>
</dbReference>
<dbReference type="GO" id="GO:0005737">
    <property type="term" value="C:cytoplasm"/>
    <property type="evidence" value="ECO:0007669"/>
    <property type="project" value="UniProtKB-SubCell"/>
</dbReference>
<dbReference type="GO" id="GO:0003677">
    <property type="term" value="F:DNA binding"/>
    <property type="evidence" value="ECO:0007669"/>
    <property type="project" value="UniProtKB-KW"/>
</dbReference>
<dbReference type="GO" id="GO:0003700">
    <property type="term" value="F:DNA-binding transcription factor activity"/>
    <property type="evidence" value="ECO:0007669"/>
    <property type="project" value="UniProtKB-UniRule"/>
</dbReference>
<dbReference type="GO" id="GO:0030145">
    <property type="term" value="F:manganese ion binding"/>
    <property type="evidence" value="ECO:0007669"/>
    <property type="project" value="UniProtKB-UniRule"/>
</dbReference>
<dbReference type="GO" id="GO:0046983">
    <property type="term" value="F:protein dimerization activity"/>
    <property type="evidence" value="ECO:0007669"/>
    <property type="project" value="InterPro"/>
</dbReference>
<dbReference type="GO" id="GO:0030026">
    <property type="term" value="P:intracellular manganese ion homeostasis"/>
    <property type="evidence" value="ECO:0007669"/>
    <property type="project" value="UniProtKB-UniRule"/>
</dbReference>
<dbReference type="FunFam" id="1.10.10.10:FF:000189">
    <property type="entry name" value="HTH-type transcriptional regulator MntR"/>
    <property type="match status" value="1"/>
</dbReference>
<dbReference type="FunFam" id="1.10.60.10:FF:000003">
    <property type="entry name" value="HTH-type transcriptional regulator MntR"/>
    <property type="match status" value="1"/>
</dbReference>
<dbReference type="Gene3D" id="1.10.60.10">
    <property type="entry name" value="Iron dependent repressor, metal binding and dimerisation domain"/>
    <property type="match status" value="1"/>
</dbReference>
<dbReference type="Gene3D" id="1.10.10.10">
    <property type="entry name" value="Winged helix-like DNA-binding domain superfamily/Winged helix DNA-binding domain"/>
    <property type="match status" value="1"/>
</dbReference>
<dbReference type="HAMAP" id="MF_00732">
    <property type="entry name" value="HTH_MntR"/>
    <property type="match status" value="1"/>
</dbReference>
<dbReference type="InterPro" id="IPR050536">
    <property type="entry name" value="DtxR_MntR_Metal-Reg"/>
</dbReference>
<dbReference type="InterPro" id="IPR001367">
    <property type="entry name" value="Fe_dep_repressor"/>
</dbReference>
<dbReference type="InterPro" id="IPR036421">
    <property type="entry name" value="Fe_dep_repressor_sf"/>
</dbReference>
<dbReference type="InterPro" id="IPR022687">
    <property type="entry name" value="HTH_DTXR"/>
</dbReference>
<dbReference type="InterPro" id="IPR022897">
    <property type="entry name" value="HTH_tscrpt_reg_MntR"/>
</dbReference>
<dbReference type="InterPro" id="IPR022689">
    <property type="entry name" value="Iron_dep_repressor"/>
</dbReference>
<dbReference type="InterPro" id="IPR036388">
    <property type="entry name" value="WH-like_DNA-bd_sf"/>
</dbReference>
<dbReference type="InterPro" id="IPR036390">
    <property type="entry name" value="WH_DNA-bd_sf"/>
</dbReference>
<dbReference type="NCBIfam" id="NF003025">
    <property type="entry name" value="PRK03902.1"/>
    <property type="match status" value="1"/>
</dbReference>
<dbReference type="PANTHER" id="PTHR33238">
    <property type="entry name" value="IRON (METAL) DEPENDENT REPRESSOR, DTXR FAMILY"/>
    <property type="match status" value="1"/>
</dbReference>
<dbReference type="PANTHER" id="PTHR33238:SF11">
    <property type="entry name" value="TRANSCRIPTIONAL REGULATOR MNTR"/>
    <property type="match status" value="1"/>
</dbReference>
<dbReference type="Pfam" id="PF02742">
    <property type="entry name" value="Fe_dep_repr_C"/>
    <property type="match status" value="1"/>
</dbReference>
<dbReference type="Pfam" id="PF01325">
    <property type="entry name" value="Fe_dep_repress"/>
    <property type="match status" value="1"/>
</dbReference>
<dbReference type="SMART" id="SM00529">
    <property type="entry name" value="HTH_DTXR"/>
    <property type="match status" value="1"/>
</dbReference>
<dbReference type="SUPFAM" id="SSF47979">
    <property type="entry name" value="Iron-dependent repressor protein, dimerization domain"/>
    <property type="match status" value="1"/>
</dbReference>
<dbReference type="SUPFAM" id="SSF46785">
    <property type="entry name" value="Winged helix' DNA-binding domain"/>
    <property type="match status" value="1"/>
</dbReference>
<dbReference type="PROSITE" id="PS50944">
    <property type="entry name" value="HTH_DTXR"/>
    <property type="match status" value="1"/>
</dbReference>
<gene>
    <name evidence="1" type="primary">mntR</name>
    <name type="ordered locus">BT9727_3946</name>
</gene>
<proteinExistence type="inferred from homology"/>
<accession>Q6HDW1</accession>
<organism>
    <name type="scientific">Bacillus thuringiensis subsp. konkukian (strain 97-27)</name>
    <dbReference type="NCBI Taxonomy" id="281309"/>
    <lineage>
        <taxon>Bacteria</taxon>
        <taxon>Bacillati</taxon>
        <taxon>Bacillota</taxon>
        <taxon>Bacilli</taxon>
        <taxon>Bacillales</taxon>
        <taxon>Bacillaceae</taxon>
        <taxon>Bacillus</taxon>
        <taxon>Bacillus cereus group</taxon>
    </lineage>
</organism>
<comment type="function">
    <text evidence="1">Central regulator of manganese homeostasis.</text>
</comment>
<comment type="activity regulation">
    <text evidence="1">DNA binding is strongly activated by Mn(2+).</text>
</comment>
<comment type="subunit">
    <text evidence="1">Homodimer.</text>
</comment>
<comment type="subcellular location">
    <subcellularLocation>
        <location evidence="1">Cytoplasm</location>
    </subcellularLocation>
</comment>
<comment type="similarity">
    <text evidence="1">Belongs to the DtxR/MntR family.</text>
</comment>
<reference key="1">
    <citation type="journal article" date="2006" name="J. Bacteriol.">
        <title>Pathogenomic sequence analysis of Bacillus cereus and Bacillus thuringiensis isolates closely related to Bacillus anthracis.</title>
        <authorList>
            <person name="Han C.S."/>
            <person name="Xie G."/>
            <person name="Challacombe J.F."/>
            <person name="Altherr M.R."/>
            <person name="Bhotika S.S."/>
            <person name="Bruce D."/>
            <person name="Campbell C.S."/>
            <person name="Campbell M.L."/>
            <person name="Chen J."/>
            <person name="Chertkov O."/>
            <person name="Cleland C."/>
            <person name="Dimitrijevic M."/>
            <person name="Doggett N.A."/>
            <person name="Fawcett J.J."/>
            <person name="Glavina T."/>
            <person name="Goodwin L.A."/>
            <person name="Hill K.K."/>
            <person name="Hitchcock P."/>
            <person name="Jackson P.J."/>
            <person name="Keim P."/>
            <person name="Kewalramani A.R."/>
            <person name="Longmire J."/>
            <person name="Lucas S."/>
            <person name="Malfatti S."/>
            <person name="McMurry K."/>
            <person name="Meincke L.J."/>
            <person name="Misra M."/>
            <person name="Moseman B.L."/>
            <person name="Mundt M."/>
            <person name="Munk A.C."/>
            <person name="Okinaka R.T."/>
            <person name="Parson-Quintana B."/>
            <person name="Reilly L.P."/>
            <person name="Richardson P."/>
            <person name="Robinson D.L."/>
            <person name="Rubin E."/>
            <person name="Saunders E."/>
            <person name="Tapia R."/>
            <person name="Tesmer J.G."/>
            <person name="Thayer N."/>
            <person name="Thompson L.S."/>
            <person name="Tice H."/>
            <person name="Ticknor L.O."/>
            <person name="Wills P.L."/>
            <person name="Brettin T.S."/>
            <person name="Gilna P."/>
        </authorList>
    </citation>
    <scope>NUCLEOTIDE SEQUENCE [LARGE SCALE GENOMIC DNA]</scope>
    <source>
        <strain>97-27</strain>
    </source>
</reference>
<feature type="chain" id="PRO_0000285042" description="HTH-type transcriptional regulator MntR">
    <location>
        <begin position="1"/>
        <end position="142"/>
    </location>
</feature>
<feature type="domain" description="HTH dtxR-type" evidence="1">
    <location>
        <begin position="1"/>
        <end position="63"/>
    </location>
</feature>
<feature type="binding site" evidence="1">
    <location>
        <position position="8"/>
    </location>
    <ligand>
        <name>Mn(2+)</name>
        <dbReference type="ChEBI" id="CHEBI:29035"/>
        <label>1</label>
    </ligand>
</feature>
<feature type="binding site" evidence="1">
    <location>
        <position position="11"/>
    </location>
    <ligand>
        <name>Mn(2+)</name>
        <dbReference type="ChEBI" id="CHEBI:29035"/>
        <label>2</label>
    </ligand>
</feature>
<feature type="binding site" evidence="1">
    <location>
        <position position="77"/>
    </location>
    <ligand>
        <name>Mn(2+)</name>
        <dbReference type="ChEBI" id="CHEBI:29035"/>
        <label>2</label>
    </ligand>
</feature>
<feature type="binding site" evidence="1">
    <location>
        <position position="99"/>
    </location>
    <ligand>
        <name>Mn(2+)</name>
        <dbReference type="ChEBI" id="CHEBI:29035"/>
        <label>1</label>
    </ligand>
</feature>
<feature type="binding site" evidence="1">
    <location>
        <position position="99"/>
    </location>
    <ligand>
        <name>Mn(2+)</name>
        <dbReference type="ChEBI" id="CHEBI:29035"/>
        <label>2</label>
    </ligand>
</feature>
<feature type="binding site" evidence="1">
    <location>
        <position position="102"/>
    </location>
    <ligand>
        <name>Mn(2+)</name>
        <dbReference type="ChEBI" id="CHEBI:29035"/>
        <label>1</label>
    </ligand>
</feature>
<feature type="binding site" evidence="1">
    <location>
        <position position="102"/>
    </location>
    <ligand>
        <name>Mn(2+)</name>
        <dbReference type="ChEBI" id="CHEBI:29035"/>
        <label>2</label>
    </ligand>
</feature>
<feature type="binding site" evidence="1">
    <location>
        <position position="103"/>
    </location>
    <ligand>
        <name>Mn(2+)</name>
        <dbReference type="ChEBI" id="CHEBI:29035"/>
        <label>1</label>
    </ligand>
</feature>
<keyword id="KW-0010">Activator</keyword>
<keyword id="KW-0963">Cytoplasm</keyword>
<keyword id="KW-0238">DNA-binding</keyword>
<keyword id="KW-0464">Manganese</keyword>
<keyword id="KW-0479">Metal-binding</keyword>
<keyword id="KW-0678">Repressor</keyword>
<keyword id="KW-0804">Transcription</keyword>
<keyword id="KW-0805">Transcription regulation</keyword>
<name>MNTR_BACHK</name>
<evidence type="ECO:0000255" key="1">
    <source>
        <dbReference type="HAMAP-Rule" id="MF_00732"/>
    </source>
</evidence>
<protein>
    <recommendedName>
        <fullName evidence="1">HTH-type transcriptional regulator MntR</fullName>
    </recommendedName>
    <alternativeName>
        <fullName evidence="1">Manganese transport regulator</fullName>
    </alternativeName>
</protein>
<sequence>MPTPSMEDYIEQIYLLIDEKGYARVSDIAEALSVHPSSVTKMVQKLDKDEYLIYEKYRGLVLTSKGKKIGERLVYRHELLEQFMRIIGVDESKIYNDVEGIEHHLSWEAIDRIGDLVQYFEQDEVRVETLRGVQKANEEKSN</sequence>